<evidence type="ECO:0000255" key="1">
    <source>
        <dbReference type="HAMAP-Rule" id="MF_00111"/>
    </source>
</evidence>
<name>MURA_PSYWF</name>
<reference key="1">
    <citation type="submission" date="2007-05" db="EMBL/GenBank/DDBJ databases">
        <title>Complete sequence of chromosome of Psychrobacter sp. PRwf-1.</title>
        <authorList>
            <consortium name="US DOE Joint Genome Institute"/>
            <person name="Copeland A."/>
            <person name="Lucas S."/>
            <person name="Lapidus A."/>
            <person name="Barry K."/>
            <person name="Detter J.C."/>
            <person name="Glavina del Rio T."/>
            <person name="Hammon N."/>
            <person name="Israni S."/>
            <person name="Dalin E."/>
            <person name="Tice H."/>
            <person name="Pitluck S."/>
            <person name="Chain P."/>
            <person name="Malfatti S."/>
            <person name="Shin M."/>
            <person name="Vergez L."/>
            <person name="Schmutz J."/>
            <person name="Larimer F."/>
            <person name="Land M."/>
            <person name="Hauser L."/>
            <person name="Kyrpides N."/>
            <person name="Kim E."/>
            <person name="Tiedje J."/>
            <person name="Richardson P."/>
        </authorList>
    </citation>
    <scope>NUCLEOTIDE SEQUENCE [LARGE SCALE GENOMIC DNA]</scope>
    <source>
        <strain>PRwf-1</strain>
    </source>
</reference>
<comment type="function">
    <text evidence="1">Cell wall formation. Adds enolpyruvyl to UDP-N-acetylglucosamine.</text>
</comment>
<comment type="catalytic activity">
    <reaction evidence="1">
        <text>phosphoenolpyruvate + UDP-N-acetyl-alpha-D-glucosamine = UDP-N-acetyl-3-O-(1-carboxyvinyl)-alpha-D-glucosamine + phosphate</text>
        <dbReference type="Rhea" id="RHEA:18681"/>
        <dbReference type="ChEBI" id="CHEBI:43474"/>
        <dbReference type="ChEBI" id="CHEBI:57705"/>
        <dbReference type="ChEBI" id="CHEBI:58702"/>
        <dbReference type="ChEBI" id="CHEBI:68483"/>
        <dbReference type="EC" id="2.5.1.7"/>
    </reaction>
</comment>
<comment type="pathway">
    <text evidence="1">Cell wall biogenesis; peptidoglycan biosynthesis.</text>
</comment>
<comment type="subcellular location">
    <subcellularLocation>
        <location evidence="1">Cytoplasm</location>
    </subcellularLocation>
</comment>
<comment type="similarity">
    <text evidence="1">Belongs to the EPSP synthase family. MurA subfamily.</text>
</comment>
<accession>A5WCR5</accession>
<sequence>MDQFLITGRSRIAGEVTISGAKNAALPLLAAMILAETPTTLNNVPSLQDVRTLIKLIAGLGIRIEKQGDTVTCDTSTIENYFAPYELVKTMRASILVLGPLLARFGEAEVSLPGGCAIGSRPVDQHLKAFKAMGAEITVENGYVKARAPEGGRLIGCEFSFDMVTVGGTENVLIAATLAKGTTVLENCAREPEVVDLANMLVAMGAKVSGIGTATLTIEGVDSLQGCEYSVVPDRIETGSYLAGALMTEGDVTTKNTDPALLQPVLQKFEEMGAIITTGDDWIRAQMTGRPKPVDIRTQPHPGFPTDMQAQLMAVCCLAEGTSTISENIFENRYMHVPELKRMGADIQVDGHTAIIRGVDSFNAAPVMATDLRASMSLVMAAAAAEGETLIDRIYHIDRGYENVEEKLRGLGVNIERVNPVTDAAEADSLDD</sequence>
<proteinExistence type="inferred from homology"/>
<protein>
    <recommendedName>
        <fullName evidence="1">UDP-N-acetylglucosamine 1-carboxyvinyltransferase</fullName>
        <ecNumber evidence="1">2.5.1.7</ecNumber>
    </recommendedName>
    <alternativeName>
        <fullName evidence="1">Enoylpyruvate transferase</fullName>
    </alternativeName>
    <alternativeName>
        <fullName evidence="1">UDP-N-acetylglucosamine enolpyruvyl transferase</fullName>
        <shortName evidence="1">EPT</shortName>
    </alternativeName>
</protein>
<gene>
    <name evidence="1" type="primary">murA</name>
    <name type="ordered locus">PsycPRwf_0501</name>
</gene>
<organism>
    <name type="scientific">Psychrobacter sp. (strain PRwf-1)</name>
    <dbReference type="NCBI Taxonomy" id="349106"/>
    <lineage>
        <taxon>Bacteria</taxon>
        <taxon>Pseudomonadati</taxon>
        <taxon>Pseudomonadota</taxon>
        <taxon>Gammaproteobacteria</taxon>
        <taxon>Moraxellales</taxon>
        <taxon>Moraxellaceae</taxon>
        <taxon>Psychrobacter</taxon>
    </lineage>
</organism>
<feature type="chain" id="PRO_1000071331" description="UDP-N-acetylglucosamine 1-carboxyvinyltransferase">
    <location>
        <begin position="1"/>
        <end position="432"/>
    </location>
</feature>
<feature type="active site" description="Proton donor" evidence="1">
    <location>
        <position position="116"/>
    </location>
</feature>
<feature type="binding site" evidence="1">
    <location>
        <begin position="22"/>
        <end position="23"/>
    </location>
    <ligand>
        <name>phosphoenolpyruvate</name>
        <dbReference type="ChEBI" id="CHEBI:58702"/>
    </ligand>
</feature>
<feature type="binding site" evidence="1">
    <location>
        <position position="92"/>
    </location>
    <ligand>
        <name>UDP-N-acetyl-alpha-D-glucosamine</name>
        <dbReference type="ChEBI" id="CHEBI:57705"/>
    </ligand>
</feature>
<feature type="binding site" evidence="1">
    <location>
        <begin position="121"/>
        <end position="125"/>
    </location>
    <ligand>
        <name>UDP-N-acetyl-alpha-D-glucosamine</name>
        <dbReference type="ChEBI" id="CHEBI:57705"/>
    </ligand>
</feature>
<feature type="binding site" evidence="1">
    <location>
        <position position="307"/>
    </location>
    <ligand>
        <name>UDP-N-acetyl-alpha-D-glucosamine</name>
        <dbReference type="ChEBI" id="CHEBI:57705"/>
    </ligand>
</feature>
<feature type="binding site" evidence="1">
    <location>
        <position position="329"/>
    </location>
    <ligand>
        <name>UDP-N-acetyl-alpha-D-glucosamine</name>
        <dbReference type="ChEBI" id="CHEBI:57705"/>
    </ligand>
</feature>
<feature type="modified residue" description="2-(S-cysteinyl)pyruvic acid O-phosphothioketal" evidence="1">
    <location>
        <position position="116"/>
    </location>
</feature>
<dbReference type="EC" id="2.5.1.7" evidence="1"/>
<dbReference type="EMBL" id="CP000713">
    <property type="protein sequence ID" value="ABQ93456.1"/>
    <property type="molecule type" value="Genomic_DNA"/>
</dbReference>
<dbReference type="SMR" id="A5WCR5"/>
<dbReference type="STRING" id="349106.PsycPRwf_0501"/>
<dbReference type="KEGG" id="prw:PsycPRwf_0501"/>
<dbReference type="eggNOG" id="COG0766">
    <property type="taxonomic scope" value="Bacteria"/>
</dbReference>
<dbReference type="HOGENOM" id="CLU_027387_0_0_6"/>
<dbReference type="UniPathway" id="UPA00219"/>
<dbReference type="GO" id="GO:0005737">
    <property type="term" value="C:cytoplasm"/>
    <property type="evidence" value="ECO:0007669"/>
    <property type="project" value="UniProtKB-SubCell"/>
</dbReference>
<dbReference type="GO" id="GO:0008760">
    <property type="term" value="F:UDP-N-acetylglucosamine 1-carboxyvinyltransferase activity"/>
    <property type="evidence" value="ECO:0007669"/>
    <property type="project" value="UniProtKB-UniRule"/>
</dbReference>
<dbReference type="GO" id="GO:0051301">
    <property type="term" value="P:cell division"/>
    <property type="evidence" value="ECO:0007669"/>
    <property type="project" value="UniProtKB-KW"/>
</dbReference>
<dbReference type="GO" id="GO:0071555">
    <property type="term" value="P:cell wall organization"/>
    <property type="evidence" value="ECO:0007669"/>
    <property type="project" value="UniProtKB-KW"/>
</dbReference>
<dbReference type="GO" id="GO:0009252">
    <property type="term" value="P:peptidoglycan biosynthetic process"/>
    <property type="evidence" value="ECO:0007669"/>
    <property type="project" value="UniProtKB-UniRule"/>
</dbReference>
<dbReference type="GO" id="GO:0008360">
    <property type="term" value="P:regulation of cell shape"/>
    <property type="evidence" value="ECO:0007669"/>
    <property type="project" value="UniProtKB-KW"/>
</dbReference>
<dbReference type="GO" id="GO:0019277">
    <property type="term" value="P:UDP-N-acetylgalactosamine biosynthetic process"/>
    <property type="evidence" value="ECO:0007669"/>
    <property type="project" value="InterPro"/>
</dbReference>
<dbReference type="CDD" id="cd01555">
    <property type="entry name" value="UdpNAET"/>
    <property type="match status" value="1"/>
</dbReference>
<dbReference type="FunFam" id="3.65.10.10:FF:000001">
    <property type="entry name" value="UDP-N-acetylglucosamine 1-carboxyvinyltransferase"/>
    <property type="match status" value="1"/>
</dbReference>
<dbReference type="Gene3D" id="3.65.10.10">
    <property type="entry name" value="Enolpyruvate transferase domain"/>
    <property type="match status" value="2"/>
</dbReference>
<dbReference type="HAMAP" id="MF_00111">
    <property type="entry name" value="MurA"/>
    <property type="match status" value="1"/>
</dbReference>
<dbReference type="InterPro" id="IPR001986">
    <property type="entry name" value="Enolpyruvate_Tfrase_dom"/>
</dbReference>
<dbReference type="InterPro" id="IPR036968">
    <property type="entry name" value="Enolpyruvate_Tfrase_sf"/>
</dbReference>
<dbReference type="InterPro" id="IPR050068">
    <property type="entry name" value="MurA_subfamily"/>
</dbReference>
<dbReference type="InterPro" id="IPR013792">
    <property type="entry name" value="RNA3'P_cycl/enolpyr_Trfase_a/b"/>
</dbReference>
<dbReference type="InterPro" id="IPR005750">
    <property type="entry name" value="UDP_GlcNAc_COvinyl_MurA"/>
</dbReference>
<dbReference type="NCBIfam" id="TIGR01072">
    <property type="entry name" value="murA"/>
    <property type="match status" value="1"/>
</dbReference>
<dbReference type="NCBIfam" id="NF006873">
    <property type="entry name" value="PRK09369.1"/>
    <property type="match status" value="1"/>
</dbReference>
<dbReference type="PANTHER" id="PTHR43783">
    <property type="entry name" value="UDP-N-ACETYLGLUCOSAMINE 1-CARBOXYVINYLTRANSFERASE"/>
    <property type="match status" value="1"/>
</dbReference>
<dbReference type="PANTHER" id="PTHR43783:SF1">
    <property type="entry name" value="UDP-N-ACETYLGLUCOSAMINE 1-CARBOXYVINYLTRANSFERASE"/>
    <property type="match status" value="1"/>
</dbReference>
<dbReference type="Pfam" id="PF00275">
    <property type="entry name" value="EPSP_synthase"/>
    <property type="match status" value="1"/>
</dbReference>
<dbReference type="SUPFAM" id="SSF55205">
    <property type="entry name" value="EPT/RTPC-like"/>
    <property type="match status" value="1"/>
</dbReference>
<keyword id="KW-0131">Cell cycle</keyword>
<keyword id="KW-0132">Cell division</keyword>
<keyword id="KW-0133">Cell shape</keyword>
<keyword id="KW-0961">Cell wall biogenesis/degradation</keyword>
<keyword id="KW-0963">Cytoplasm</keyword>
<keyword id="KW-0573">Peptidoglycan synthesis</keyword>
<keyword id="KW-0670">Pyruvate</keyword>
<keyword id="KW-0808">Transferase</keyword>